<sequence length="176" mass="19011">MVTIALGSKNPVKISATKEALEILRLNWDLIATDIDSGVDKQPFCDQTYVGARNRALNAIKATNADIGLGIEGGVCNVYGKFIANAVVYVITKEGVENFAISSSFTLPSSIVSLILQGKELGEASDIIFKTINSKTKEGAVGLLTNNIIDRKTLYVQPIILALYPIYNTIINNTLF</sequence>
<name>NCPP_SACS2</name>
<keyword id="KW-0378">Hydrolase</keyword>
<keyword id="KW-0460">Magnesium</keyword>
<keyword id="KW-0464">Manganese</keyword>
<keyword id="KW-0479">Metal-binding</keyword>
<keyword id="KW-0546">Nucleotide metabolism</keyword>
<keyword id="KW-0547">Nucleotide-binding</keyword>
<keyword id="KW-1185">Reference proteome</keyword>
<gene>
    <name type="ordered locus">SSO2230</name>
</gene>
<organism>
    <name type="scientific">Saccharolobus solfataricus (strain ATCC 35092 / DSM 1617 / JCM 11322 / P2)</name>
    <name type="common">Sulfolobus solfataricus</name>
    <dbReference type="NCBI Taxonomy" id="273057"/>
    <lineage>
        <taxon>Archaea</taxon>
        <taxon>Thermoproteota</taxon>
        <taxon>Thermoprotei</taxon>
        <taxon>Sulfolobales</taxon>
        <taxon>Sulfolobaceae</taxon>
        <taxon>Saccharolobus</taxon>
    </lineage>
</organism>
<reference key="1">
    <citation type="journal article" date="2001" name="Proc. Natl. Acad. Sci. U.S.A.">
        <title>The complete genome of the crenarchaeon Sulfolobus solfataricus P2.</title>
        <authorList>
            <person name="She Q."/>
            <person name="Singh R.K."/>
            <person name="Confalonieri F."/>
            <person name="Zivanovic Y."/>
            <person name="Allard G."/>
            <person name="Awayez M.J."/>
            <person name="Chan-Weiher C.C.-Y."/>
            <person name="Clausen I.G."/>
            <person name="Curtis B.A."/>
            <person name="De Moors A."/>
            <person name="Erauso G."/>
            <person name="Fletcher C."/>
            <person name="Gordon P.M.K."/>
            <person name="Heikamp-de Jong I."/>
            <person name="Jeffries A.C."/>
            <person name="Kozera C.J."/>
            <person name="Medina N."/>
            <person name="Peng X."/>
            <person name="Thi-Ngoc H.P."/>
            <person name="Redder P."/>
            <person name="Schenk M.E."/>
            <person name="Theriault C."/>
            <person name="Tolstrup N."/>
            <person name="Charlebois R.L."/>
            <person name="Doolittle W.F."/>
            <person name="Duguet M."/>
            <person name="Gaasterland T."/>
            <person name="Garrett R.A."/>
            <person name="Ragan M.A."/>
            <person name="Sensen C.W."/>
            <person name="Van der Oost J."/>
        </authorList>
    </citation>
    <scope>NUCLEOTIDE SEQUENCE [LARGE SCALE GENOMIC DNA]</scope>
    <source>
        <strain>ATCC 35092 / DSM 1617 / JCM 11322 / P2</strain>
    </source>
</reference>
<evidence type="ECO:0000255" key="1">
    <source>
        <dbReference type="HAMAP-Rule" id="MF_00648"/>
    </source>
</evidence>
<proteinExistence type="inferred from homology"/>
<feature type="chain" id="PRO_0000156364" description="Probable inosine/xanthosine triphosphatase">
    <location>
        <begin position="1"/>
        <end position="176"/>
    </location>
</feature>
<feature type="binding site" evidence="1">
    <location>
        <position position="36"/>
    </location>
    <ligand>
        <name>Mg(2+)</name>
        <dbReference type="ChEBI" id="CHEBI:18420"/>
    </ligand>
</feature>
<protein>
    <recommendedName>
        <fullName evidence="1">Probable inosine/xanthosine triphosphatase</fullName>
        <shortName evidence="1">ITPase/XTPase</shortName>
        <ecNumber evidence="1">3.6.1.73</ecNumber>
    </recommendedName>
    <alternativeName>
        <fullName evidence="1">Non-canonical purine NTP phosphatase</fullName>
    </alternativeName>
    <alternativeName>
        <fullName evidence="1">Non-standard purine NTP phosphatase</fullName>
    </alternativeName>
    <alternativeName>
        <fullName evidence="1">Nucleoside-triphosphate phosphatase</fullName>
        <shortName evidence="1">NTPase</shortName>
    </alternativeName>
</protein>
<comment type="function">
    <text evidence="1">Phosphatase that hydrolyzes non-canonical purine nucleotides such as XTP and ITP to their respective diphosphate derivatives. Probably excludes non-canonical purines from DNA/RNA precursor pool, thus preventing their incorporation into DNA/RNA and avoiding chromosomal lesions.</text>
</comment>
<comment type="catalytic activity">
    <reaction evidence="1">
        <text>XTP + H2O = XDP + phosphate + H(+)</text>
        <dbReference type="Rhea" id="RHEA:28406"/>
        <dbReference type="ChEBI" id="CHEBI:15377"/>
        <dbReference type="ChEBI" id="CHEBI:15378"/>
        <dbReference type="ChEBI" id="CHEBI:43474"/>
        <dbReference type="ChEBI" id="CHEBI:59884"/>
        <dbReference type="ChEBI" id="CHEBI:61314"/>
        <dbReference type="EC" id="3.6.1.73"/>
    </reaction>
</comment>
<comment type="catalytic activity">
    <reaction evidence="1">
        <text>ITP + H2O = IDP + phosphate + H(+)</text>
        <dbReference type="Rhea" id="RHEA:28330"/>
        <dbReference type="ChEBI" id="CHEBI:15377"/>
        <dbReference type="ChEBI" id="CHEBI:15378"/>
        <dbReference type="ChEBI" id="CHEBI:43474"/>
        <dbReference type="ChEBI" id="CHEBI:58280"/>
        <dbReference type="ChEBI" id="CHEBI:61402"/>
        <dbReference type="EC" id="3.6.1.73"/>
    </reaction>
</comment>
<comment type="cofactor">
    <cofactor evidence="1">
        <name>Mg(2+)</name>
        <dbReference type="ChEBI" id="CHEBI:18420"/>
    </cofactor>
    <cofactor evidence="1">
        <name>Mn(2+)</name>
        <dbReference type="ChEBI" id="CHEBI:29035"/>
    </cofactor>
    <text evidence="1">Binds 1 divalent metal cation per subunit; can use either Mg(2+) or Mn(2+).</text>
</comment>
<comment type="subunit">
    <text evidence="1">Homodimer.</text>
</comment>
<comment type="similarity">
    <text evidence="1">Belongs to the YjjX NTPase family.</text>
</comment>
<accession>Q97WI6</accession>
<dbReference type="EC" id="3.6.1.73" evidence="1"/>
<dbReference type="EMBL" id="AE006641">
    <property type="protein sequence ID" value="AAK42400.1"/>
    <property type="molecule type" value="Genomic_DNA"/>
</dbReference>
<dbReference type="PIR" id="A90393">
    <property type="entry name" value="A90393"/>
</dbReference>
<dbReference type="RefSeq" id="WP_009992042.1">
    <property type="nucleotide sequence ID" value="NC_002754.1"/>
</dbReference>
<dbReference type="SMR" id="Q97WI6"/>
<dbReference type="FunCoup" id="Q97WI6">
    <property type="interactions" value="22"/>
</dbReference>
<dbReference type="STRING" id="273057.SSO2230"/>
<dbReference type="PaxDb" id="273057-SSO2230"/>
<dbReference type="EnsemblBacteria" id="AAK42400">
    <property type="protein sequence ID" value="AAK42400"/>
    <property type="gene ID" value="SSO2230"/>
</dbReference>
<dbReference type="KEGG" id="sso:SSO2230"/>
<dbReference type="PATRIC" id="fig|273057.12.peg.2327"/>
<dbReference type="eggNOG" id="arCOG01221">
    <property type="taxonomic scope" value="Archaea"/>
</dbReference>
<dbReference type="HOGENOM" id="CLU_087417_0_0_2"/>
<dbReference type="InParanoid" id="Q97WI6"/>
<dbReference type="PhylomeDB" id="Q97WI6"/>
<dbReference type="Proteomes" id="UP000001974">
    <property type="component" value="Chromosome"/>
</dbReference>
<dbReference type="GO" id="GO:0103023">
    <property type="term" value="F:ITPase activity"/>
    <property type="evidence" value="ECO:0007669"/>
    <property type="project" value="UniProtKB-EC"/>
</dbReference>
<dbReference type="GO" id="GO:0046872">
    <property type="term" value="F:metal ion binding"/>
    <property type="evidence" value="ECO:0007669"/>
    <property type="project" value="UniProtKB-KW"/>
</dbReference>
<dbReference type="GO" id="GO:0000166">
    <property type="term" value="F:nucleotide binding"/>
    <property type="evidence" value="ECO:0007669"/>
    <property type="project" value="UniProtKB-KW"/>
</dbReference>
<dbReference type="GO" id="GO:0017111">
    <property type="term" value="F:ribonucleoside triphosphate phosphatase activity"/>
    <property type="evidence" value="ECO:0000250"/>
    <property type="project" value="UniProtKB"/>
</dbReference>
<dbReference type="GO" id="GO:0009117">
    <property type="term" value="P:nucleotide metabolic process"/>
    <property type="evidence" value="ECO:0007669"/>
    <property type="project" value="UniProtKB-KW"/>
</dbReference>
<dbReference type="GO" id="GO:0006772">
    <property type="term" value="P:thiamine metabolic process"/>
    <property type="evidence" value="ECO:0000318"/>
    <property type="project" value="GO_Central"/>
</dbReference>
<dbReference type="FunFam" id="3.90.950.10:FF:000002">
    <property type="entry name" value="Inosine/xanthosine triphosphatase"/>
    <property type="match status" value="1"/>
</dbReference>
<dbReference type="Gene3D" id="3.90.950.10">
    <property type="match status" value="1"/>
</dbReference>
<dbReference type="HAMAP" id="MF_00648">
    <property type="entry name" value="Non_canon_purine_NTPase_YjjX"/>
    <property type="match status" value="1"/>
</dbReference>
<dbReference type="InterPro" id="IPR029001">
    <property type="entry name" value="ITPase-like_fam"/>
</dbReference>
<dbReference type="InterPro" id="IPR002786">
    <property type="entry name" value="Non_canon_purine_NTPase"/>
</dbReference>
<dbReference type="InterPro" id="IPR026533">
    <property type="entry name" value="NTPase/PRRC1"/>
</dbReference>
<dbReference type="InterPro" id="IPR050299">
    <property type="entry name" value="YjjX_NTPase"/>
</dbReference>
<dbReference type="PANTHER" id="PTHR34699">
    <property type="match status" value="1"/>
</dbReference>
<dbReference type="PANTHER" id="PTHR34699:SF2">
    <property type="entry name" value="NON-CANONICAL PURINE NTP PHOSPHATASE_PRRC1 DOMAIN-CONTAINING PROTEIN"/>
    <property type="match status" value="1"/>
</dbReference>
<dbReference type="Pfam" id="PF01931">
    <property type="entry name" value="NTPase_I-T"/>
    <property type="match status" value="1"/>
</dbReference>
<dbReference type="SUPFAM" id="SSF52972">
    <property type="entry name" value="ITPase-like"/>
    <property type="match status" value="1"/>
</dbReference>